<organism>
    <name type="scientific">Chloroflexus aggregans (strain MD-66 / DSM 9485)</name>
    <dbReference type="NCBI Taxonomy" id="326427"/>
    <lineage>
        <taxon>Bacteria</taxon>
        <taxon>Bacillati</taxon>
        <taxon>Chloroflexota</taxon>
        <taxon>Chloroflexia</taxon>
        <taxon>Chloroflexales</taxon>
        <taxon>Chloroflexineae</taxon>
        <taxon>Chloroflexaceae</taxon>
        <taxon>Chloroflexus</taxon>
    </lineage>
</organism>
<sequence length="212" mass="23851">MERSDQPPDVVIRRLPLYARSLRYLLEEGIHSVSSQELGERINVTAAQIRKDLSYFGEFGKQGIGYDVEKLLHHIERILGLNQHWPVVLVGIGLLGQAIARYEGFRSEGIEIVALFDSDPAKIGQRVGDLVIQDFANVRRVVAEKQVKLAIIAVPALQAQRVADVLIEAGVRAILSYAPMILQVPEDVWVRYIDPVAVLQSMTYYLAREQQH</sequence>
<comment type="function">
    <text evidence="1">Modulates transcription in response to changes in cellular NADH/NAD(+) redox state.</text>
</comment>
<comment type="subunit">
    <text evidence="1">Homodimer.</text>
</comment>
<comment type="subcellular location">
    <subcellularLocation>
        <location evidence="1">Cytoplasm</location>
    </subcellularLocation>
</comment>
<comment type="similarity">
    <text evidence="1">Belongs to the transcriptional regulatory Rex family.</text>
</comment>
<keyword id="KW-0963">Cytoplasm</keyword>
<keyword id="KW-0238">DNA-binding</keyword>
<keyword id="KW-0520">NAD</keyword>
<keyword id="KW-0678">Repressor</keyword>
<keyword id="KW-0804">Transcription</keyword>
<keyword id="KW-0805">Transcription regulation</keyword>
<protein>
    <recommendedName>
        <fullName evidence="1">Redox-sensing transcriptional repressor Rex</fullName>
    </recommendedName>
</protein>
<reference key="1">
    <citation type="submission" date="2008-12" db="EMBL/GenBank/DDBJ databases">
        <title>Complete sequence of Chloroflexus aggregans DSM 9485.</title>
        <authorList>
            <consortium name="US DOE Joint Genome Institute"/>
            <person name="Lucas S."/>
            <person name="Copeland A."/>
            <person name="Lapidus A."/>
            <person name="Glavina del Rio T."/>
            <person name="Dalin E."/>
            <person name="Tice H."/>
            <person name="Pitluck S."/>
            <person name="Foster B."/>
            <person name="Larimer F."/>
            <person name="Land M."/>
            <person name="Hauser L."/>
            <person name="Kyrpides N."/>
            <person name="Mikhailova N."/>
            <person name="Bryant D.A."/>
            <person name="Richardson P."/>
        </authorList>
    </citation>
    <scope>NUCLEOTIDE SEQUENCE [LARGE SCALE GENOMIC DNA]</scope>
    <source>
        <strain>MD-66 / DSM 9485</strain>
    </source>
</reference>
<name>REX_CHLAD</name>
<feature type="chain" id="PRO_1000164080" description="Redox-sensing transcriptional repressor Rex">
    <location>
        <begin position="1"/>
        <end position="212"/>
    </location>
</feature>
<feature type="DNA-binding region" description="H-T-H motif" evidence="1">
    <location>
        <begin position="17"/>
        <end position="56"/>
    </location>
</feature>
<feature type="binding site" evidence="1">
    <location>
        <begin position="91"/>
        <end position="96"/>
    </location>
    <ligand>
        <name>NAD(+)</name>
        <dbReference type="ChEBI" id="CHEBI:57540"/>
    </ligand>
</feature>
<evidence type="ECO:0000255" key="1">
    <source>
        <dbReference type="HAMAP-Rule" id="MF_01131"/>
    </source>
</evidence>
<proteinExistence type="inferred from homology"/>
<dbReference type="EMBL" id="CP001337">
    <property type="protein sequence ID" value="ACL23108.1"/>
    <property type="molecule type" value="Genomic_DNA"/>
</dbReference>
<dbReference type="RefSeq" id="WP_012615474.1">
    <property type="nucleotide sequence ID" value="NC_011831.1"/>
</dbReference>
<dbReference type="SMR" id="B8GCQ8"/>
<dbReference type="STRING" id="326427.Cagg_0157"/>
<dbReference type="KEGG" id="cag:Cagg_0157"/>
<dbReference type="eggNOG" id="COG2344">
    <property type="taxonomic scope" value="Bacteria"/>
</dbReference>
<dbReference type="HOGENOM" id="CLU_061534_1_0_0"/>
<dbReference type="OrthoDB" id="9784760at2"/>
<dbReference type="Proteomes" id="UP000002508">
    <property type="component" value="Chromosome"/>
</dbReference>
<dbReference type="GO" id="GO:0005737">
    <property type="term" value="C:cytoplasm"/>
    <property type="evidence" value="ECO:0007669"/>
    <property type="project" value="UniProtKB-SubCell"/>
</dbReference>
<dbReference type="GO" id="GO:0003677">
    <property type="term" value="F:DNA binding"/>
    <property type="evidence" value="ECO:0007669"/>
    <property type="project" value="UniProtKB-UniRule"/>
</dbReference>
<dbReference type="GO" id="GO:0003700">
    <property type="term" value="F:DNA-binding transcription factor activity"/>
    <property type="evidence" value="ECO:0007669"/>
    <property type="project" value="UniProtKB-UniRule"/>
</dbReference>
<dbReference type="GO" id="GO:0045892">
    <property type="term" value="P:negative regulation of DNA-templated transcription"/>
    <property type="evidence" value="ECO:0007669"/>
    <property type="project" value="InterPro"/>
</dbReference>
<dbReference type="GO" id="GO:0051775">
    <property type="term" value="P:response to redox state"/>
    <property type="evidence" value="ECO:0007669"/>
    <property type="project" value="InterPro"/>
</dbReference>
<dbReference type="Gene3D" id="3.40.50.720">
    <property type="entry name" value="NAD(P)-binding Rossmann-like Domain"/>
    <property type="match status" value="1"/>
</dbReference>
<dbReference type="Gene3D" id="1.10.10.10">
    <property type="entry name" value="Winged helix-like DNA-binding domain superfamily/Winged helix DNA-binding domain"/>
    <property type="match status" value="1"/>
</dbReference>
<dbReference type="HAMAP" id="MF_01131">
    <property type="entry name" value="Rex"/>
    <property type="match status" value="1"/>
</dbReference>
<dbReference type="InterPro" id="IPR003781">
    <property type="entry name" value="CoA-bd"/>
</dbReference>
<dbReference type="InterPro" id="IPR036291">
    <property type="entry name" value="NAD(P)-bd_dom_sf"/>
</dbReference>
<dbReference type="InterPro" id="IPR009718">
    <property type="entry name" value="Rex_DNA-bd_C_dom"/>
</dbReference>
<dbReference type="InterPro" id="IPR022876">
    <property type="entry name" value="Tscrpt_rep_Rex"/>
</dbReference>
<dbReference type="InterPro" id="IPR036388">
    <property type="entry name" value="WH-like_DNA-bd_sf"/>
</dbReference>
<dbReference type="InterPro" id="IPR036390">
    <property type="entry name" value="WH_DNA-bd_sf"/>
</dbReference>
<dbReference type="NCBIfam" id="NF003989">
    <property type="entry name" value="PRK05472.1-3"/>
    <property type="match status" value="1"/>
</dbReference>
<dbReference type="NCBIfam" id="NF003992">
    <property type="entry name" value="PRK05472.2-1"/>
    <property type="match status" value="1"/>
</dbReference>
<dbReference type="NCBIfam" id="NF003993">
    <property type="entry name" value="PRK05472.2-2"/>
    <property type="match status" value="1"/>
</dbReference>
<dbReference type="NCBIfam" id="NF003994">
    <property type="entry name" value="PRK05472.2-3"/>
    <property type="match status" value="1"/>
</dbReference>
<dbReference type="NCBIfam" id="NF003995">
    <property type="entry name" value="PRK05472.2-4"/>
    <property type="match status" value="1"/>
</dbReference>
<dbReference type="NCBIfam" id="NF003996">
    <property type="entry name" value="PRK05472.2-5"/>
    <property type="match status" value="1"/>
</dbReference>
<dbReference type="PANTHER" id="PTHR35786">
    <property type="entry name" value="REDOX-SENSING TRANSCRIPTIONAL REPRESSOR REX"/>
    <property type="match status" value="1"/>
</dbReference>
<dbReference type="PANTHER" id="PTHR35786:SF1">
    <property type="entry name" value="REDOX-SENSING TRANSCRIPTIONAL REPRESSOR REX 1"/>
    <property type="match status" value="1"/>
</dbReference>
<dbReference type="Pfam" id="PF02629">
    <property type="entry name" value="CoA_binding"/>
    <property type="match status" value="1"/>
</dbReference>
<dbReference type="Pfam" id="PF06971">
    <property type="entry name" value="Put_DNA-bind_N"/>
    <property type="match status" value="1"/>
</dbReference>
<dbReference type="SMART" id="SM00881">
    <property type="entry name" value="CoA_binding"/>
    <property type="match status" value="1"/>
</dbReference>
<dbReference type="SUPFAM" id="SSF51735">
    <property type="entry name" value="NAD(P)-binding Rossmann-fold domains"/>
    <property type="match status" value="1"/>
</dbReference>
<dbReference type="SUPFAM" id="SSF46785">
    <property type="entry name" value="Winged helix' DNA-binding domain"/>
    <property type="match status" value="1"/>
</dbReference>
<accession>B8GCQ8</accession>
<gene>
    <name evidence="1" type="primary">rex</name>
    <name type="ordered locus">Cagg_0157</name>
</gene>